<keyword id="KW-0012">Acyltransferase</keyword>
<keyword id="KW-0903">Direct protein sequencing</keyword>
<keyword id="KW-0256">Endoplasmic reticulum</keyword>
<keyword id="KW-0319">Glycerol metabolism</keyword>
<keyword id="KW-0444">Lipid biosynthesis</keyword>
<keyword id="KW-0443">Lipid metabolism</keyword>
<keyword id="KW-0472">Membrane</keyword>
<keyword id="KW-0808">Transferase</keyword>
<keyword id="KW-0812">Transmembrane</keyword>
<keyword id="KW-1133">Transmembrane helix</keyword>
<gene>
    <name type="primary">DGAT2B</name>
</gene>
<protein>
    <recommendedName>
        <fullName>Diacylglycerol O-acyltransferase 2B</fullName>
        <ecNumber>2.3.1.20</ecNumber>
    </recommendedName>
    <alternativeName>
        <fullName>Diglyceride acyltransferase 2B</fullName>
    </alternativeName>
    <alternativeName>
        <fullName>MrDGAT2B</fullName>
    </alternativeName>
</protein>
<comment type="function">
    <text>Catalyzes the terminal and only committed step in triacylglycerol synthesis by using diacylglycerol and fatty acyl CoA as substrates. Required for storage lipid synthesis.</text>
</comment>
<comment type="catalytic activity">
    <reaction evidence="3">
        <text>an acyl-CoA + a 1,2-diacyl-sn-glycerol = a triacyl-sn-glycerol + CoA</text>
        <dbReference type="Rhea" id="RHEA:10868"/>
        <dbReference type="ChEBI" id="CHEBI:17815"/>
        <dbReference type="ChEBI" id="CHEBI:57287"/>
        <dbReference type="ChEBI" id="CHEBI:58342"/>
        <dbReference type="ChEBI" id="CHEBI:64615"/>
        <dbReference type="EC" id="2.3.1.20"/>
    </reaction>
</comment>
<comment type="biophysicochemical properties">
    <phDependence>
        <text evidence="3">Optimum pH is 6.0-8.0.</text>
    </phDependence>
</comment>
<comment type="pathway">
    <text>Glycerolipid metabolism; triacylglycerol biosynthesis.</text>
</comment>
<comment type="subcellular location">
    <subcellularLocation>
        <location evidence="1">Endoplasmic reticulum membrane</location>
        <topology evidence="1">Multi-pass membrane protein</topology>
    </subcellularLocation>
</comment>
<comment type="similarity">
    <text evidence="4">Belongs to the diacylglycerol acyltransferase family.</text>
</comment>
<organism>
    <name type="scientific">Umbelopsis ramanniana</name>
    <name type="common">Oleaginous fungus</name>
    <name type="synonym">Mortierella ramanniana</name>
    <dbReference type="NCBI Taxonomy" id="41833"/>
    <lineage>
        <taxon>Eukaryota</taxon>
        <taxon>Fungi</taxon>
        <taxon>Fungi incertae sedis</taxon>
        <taxon>Mucoromycota</taxon>
        <taxon>Mucoromycotina</taxon>
        <taxon>Umbelopsidomycetes</taxon>
        <taxon>Umbelopsidales</taxon>
        <taxon>Umbelopsidaceae</taxon>
        <taxon>Umbelopsis</taxon>
    </lineage>
</organism>
<proteinExistence type="evidence at protein level"/>
<feature type="chain" id="PRO_0000249056" description="Diacylglycerol O-acyltransferase 2B">
    <location>
        <begin position="1"/>
        <end position="349"/>
    </location>
</feature>
<feature type="transmembrane region" description="Helical" evidence="2">
    <location>
        <begin position="44"/>
        <end position="64"/>
    </location>
</feature>
<feature type="transmembrane region" description="Helical" evidence="2">
    <location>
        <begin position="114"/>
        <end position="134"/>
    </location>
</feature>
<accession>Q96UY1</accession>
<dbReference type="EC" id="2.3.1.20"/>
<dbReference type="EMBL" id="AF391090">
    <property type="protein sequence ID" value="AAK84180.1"/>
    <property type="molecule type" value="mRNA"/>
</dbReference>
<dbReference type="BRENDA" id="2.3.1.20">
    <property type="organism ID" value="3434"/>
</dbReference>
<dbReference type="UniPathway" id="UPA00282"/>
<dbReference type="GO" id="GO:0005789">
    <property type="term" value="C:endoplasmic reticulum membrane"/>
    <property type="evidence" value="ECO:0007669"/>
    <property type="project" value="UniProtKB-SubCell"/>
</dbReference>
<dbReference type="GO" id="GO:0004144">
    <property type="term" value="F:diacylglycerol O-acyltransferase activity"/>
    <property type="evidence" value="ECO:0007669"/>
    <property type="project" value="UniProtKB-EC"/>
</dbReference>
<dbReference type="GO" id="GO:0006071">
    <property type="term" value="P:glycerol metabolic process"/>
    <property type="evidence" value="ECO:0007669"/>
    <property type="project" value="UniProtKB-KW"/>
</dbReference>
<dbReference type="GO" id="GO:0019432">
    <property type="term" value="P:triglyceride biosynthetic process"/>
    <property type="evidence" value="ECO:0007669"/>
    <property type="project" value="UniProtKB-UniPathway"/>
</dbReference>
<dbReference type="CDD" id="cd07987">
    <property type="entry name" value="LPLAT_MGAT-like"/>
    <property type="match status" value="1"/>
</dbReference>
<dbReference type="InterPro" id="IPR007130">
    <property type="entry name" value="DAGAT"/>
</dbReference>
<dbReference type="PANTHER" id="PTHR12317:SF0">
    <property type="entry name" value="ACYLTRANSFERASE"/>
    <property type="match status" value="1"/>
</dbReference>
<dbReference type="PANTHER" id="PTHR12317">
    <property type="entry name" value="DIACYLGLYCEROL O-ACYLTRANSFERASE"/>
    <property type="match status" value="1"/>
</dbReference>
<dbReference type="Pfam" id="PF03982">
    <property type="entry name" value="DAGAT"/>
    <property type="match status" value="1"/>
</dbReference>
<dbReference type="SUPFAM" id="SSF69593">
    <property type="entry name" value="Glycerol-3-phosphate (1)-acyltransferase"/>
    <property type="match status" value="1"/>
</dbReference>
<evidence type="ECO:0000250" key="1"/>
<evidence type="ECO:0000255" key="2"/>
<evidence type="ECO:0000269" key="3">
    <source>
    </source>
</evidence>
<evidence type="ECO:0000305" key="4"/>
<sequence length="349" mass="39596">MEQVQVTALLDHIPKVHWAPLRGIPLKRRLQTSAIVTWLALLPICLIIYLYLFTIPLLWPILIMYTIWLFFDKAPENGGRRISLVRKLPLWKHFANYFPVTLIKEGDLDPKGNYIMSYHPHGIISMAAFANFATEATGFSEQYPGIVPSLLTLASNFRLPLYRDFMMSLGMCSVSRHSCEAILRSGPGRSIVIVTGGASESLSARPGTNDLTLKKRLGFIRLAIRNGASLVPIFSFGENDIYEQYDNKKGSLIWRYQKWFQKITGFTVPLAHARGIFNYNAGFIPFRHPIVTVVGKPIAVPLLAEGETEPSEEQMHQVQAQYIESLQAIYDKYKDIYAKDRIKDMTMIA</sequence>
<name>DGT2B_UMBRA</name>
<reference key="1">
    <citation type="journal article" date="2001" name="J. Biol. Chem.">
        <title>DGAT2 is a new diacylglycerol acyltransferase gene family. purification, cloning, and expression in insect cells of two polypeptides from Mortierella ramanniana with diacylglycerol acyltransferase activity.</title>
        <authorList>
            <person name="Lardizabal K.D."/>
            <person name="Mai J.T."/>
            <person name="Wagner N.W."/>
            <person name="Wyrick A."/>
            <person name="Voelker T."/>
            <person name="Hawkins D.J."/>
        </authorList>
    </citation>
    <scope>NUCLEOTIDE SEQUENCE [MRNA]</scope>
    <scope>PARTIAL PROTEIN SEQUENCE</scope>
    <scope>BIOPHYSICOCHEMICAL PROPERTIES</scope>
    <scope>ENZYME ACTIVITY</scope>
</reference>